<gene>
    <name type="primary">MB</name>
</gene>
<accession>P56208</accession>
<reference key="1">
    <citation type="journal article" date="1993" name="Biochem. Mol. Biol. Int.">
        <title>Structural studies on the loggerhead sea turtle (Caretta caretta) myoglobin.</title>
        <authorList>
            <person name="Petruzzelli R."/>
            <person name="Aureli G."/>
            <person name="Casale E."/>
            <person name="Nardini M."/>
            <person name="Rizzi M."/>
            <person name="Ascenzi P."/>
            <person name="Coletta M."/>
            <person name="de Sanctis G."/>
            <person name="Desideri A."/>
            <person name="Galtieri A."/>
            <person name="Bolognesi M."/>
        </authorList>
    </citation>
    <scope>PROTEIN SEQUENCE OF 2-154</scope>
</reference>
<reference key="2">
    <citation type="journal article" date="1995" name="J. Mol. Biol.">
        <title>Reptile heme protein structure: X-ray crystallographic study of the aquo-met and cyano-met derivatives of the loggerhead sea turtle (Caretta caretta) myoglobin at 2.0-A resolution.</title>
        <authorList>
            <person name="Nardini M."/>
            <person name="Tarricone C."/>
            <person name="Rizzi M."/>
            <person name="Lania A."/>
            <person name="Desideri A."/>
            <person name="de Sanctis G."/>
            <person name="Coletta M."/>
            <person name="Petruzzelli R."/>
            <person name="Ascenzi P."/>
            <person name="Coda A."/>
            <person name="Bolognesi M."/>
        </authorList>
    </citation>
    <scope>X-RAY CRYSTALLOGRAPHY (2.00 ANGSTROMS) OF 2-154 IN COMPLEX WITH HEME</scope>
</reference>
<protein>
    <recommendedName>
        <fullName>Myoglobin</fullName>
    </recommendedName>
    <alternativeName>
        <fullName evidence="1">Nitrite reductase MB</fullName>
        <ecNumber evidence="1">1.7.-.-</ecNumber>
    </alternativeName>
    <alternativeName>
        <fullName evidence="1">Pseudoperoxidase MB</fullName>
        <ecNumber evidence="1">1.11.1.-</ecNumber>
    </alternativeName>
</protein>
<organism>
    <name type="scientific">Caretta caretta</name>
    <name type="common">Loggerhead sea turtle</name>
    <dbReference type="NCBI Taxonomy" id="8467"/>
    <lineage>
        <taxon>Eukaryota</taxon>
        <taxon>Metazoa</taxon>
        <taxon>Chordata</taxon>
        <taxon>Craniata</taxon>
        <taxon>Vertebrata</taxon>
        <taxon>Euteleostomi</taxon>
        <taxon>Archelosauria</taxon>
        <taxon>Testudinata</taxon>
        <taxon>Testudines</taxon>
        <taxon>Cryptodira</taxon>
        <taxon>Durocryptodira</taxon>
        <taxon>Americhelydia</taxon>
        <taxon>Chelonioidea</taxon>
        <taxon>Cheloniidae</taxon>
        <taxon>Caretta</taxon>
    </lineage>
</organism>
<name>MYG_CARCR</name>
<feature type="initiator methionine" description="Removed" evidence="7">
    <location>
        <position position="1"/>
    </location>
</feature>
<feature type="chain" id="PRO_0000053380" description="Myoglobin">
    <location>
        <begin position="2"/>
        <end position="154"/>
    </location>
</feature>
<feature type="domain" description="Globin" evidence="5">
    <location>
        <begin position="2"/>
        <end position="148"/>
    </location>
</feature>
<feature type="binding site" evidence="4">
    <location>
        <position position="65"/>
    </location>
    <ligand>
        <name>nitrite</name>
        <dbReference type="ChEBI" id="CHEBI:16301"/>
    </ligand>
</feature>
<feature type="binding site" evidence="3 5">
    <location>
        <position position="65"/>
    </location>
    <ligand>
        <name>O2</name>
        <dbReference type="ChEBI" id="CHEBI:15379"/>
    </ligand>
</feature>
<feature type="binding site" description="proximal binding residue" evidence="6 8 9">
    <location>
        <position position="94"/>
    </location>
    <ligand>
        <name>heme b</name>
        <dbReference type="ChEBI" id="CHEBI:60344"/>
    </ligand>
    <ligandPart>
        <name>Fe</name>
        <dbReference type="ChEBI" id="CHEBI:18248"/>
    </ligandPart>
</feature>
<feature type="helix" evidence="10">
    <location>
        <begin position="5"/>
        <end position="18"/>
    </location>
</feature>
<feature type="helix" evidence="10">
    <location>
        <begin position="19"/>
        <end position="21"/>
    </location>
</feature>
<feature type="helix" evidence="10">
    <location>
        <begin position="22"/>
        <end position="36"/>
    </location>
</feature>
<feature type="helix" evidence="10">
    <location>
        <begin position="38"/>
        <end position="41"/>
    </location>
</feature>
<feature type="helix" evidence="10">
    <location>
        <begin position="45"/>
        <end position="47"/>
    </location>
</feature>
<feature type="helix" evidence="10">
    <location>
        <begin position="53"/>
        <end position="57"/>
    </location>
</feature>
<feature type="helix" evidence="10">
    <location>
        <begin position="60"/>
        <end position="77"/>
    </location>
</feature>
<feature type="turn" evidence="10">
    <location>
        <begin position="78"/>
        <end position="81"/>
    </location>
</feature>
<feature type="helix" evidence="10">
    <location>
        <begin position="84"/>
        <end position="96"/>
    </location>
</feature>
<feature type="helix" evidence="10">
    <location>
        <begin position="102"/>
        <end position="119"/>
    </location>
</feature>
<feature type="turn" evidence="10">
    <location>
        <begin position="121"/>
        <end position="123"/>
    </location>
</feature>
<feature type="helix" evidence="10">
    <location>
        <begin position="126"/>
        <end position="148"/>
    </location>
</feature>
<feature type="turn" evidence="10">
    <location>
        <begin position="149"/>
        <end position="151"/>
    </location>
</feature>
<keyword id="KW-0002">3D-structure</keyword>
<keyword id="KW-0963">Cytoplasm</keyword>
<keyword id="KW-0903">Direct protein sequencing</keyword>
<keyword id="KW-0349">Heme</keyword>
<keyword id="KW-0408">Iron</keyword>
<keyword id="KW-0479">Metal-binding</keyword>
<keyword id="KW-0514">Muscle protein</keyword>
<keyword id="KW-0560">Oxidoreductase</keyword>
<keyword id="KW-0561">Oxygen transport</keyword>
<keyword id="KW-0813">Transport</keyword>
<dbReference type="EC" id="1.7.-.-" evidence="1"/>
<dbReference type="EC" id="1.11.1.-" evidence="1"/>
<dbReference type="RefSeq" id="XP_048688771.1">
    <property type="nucleotide sequence ID" value="XM_048832814.1"/>
</dbReference>
<dbReference type="RefSeq" id="XP_048688781.1">
    <property type="nucleotide sequence ID" value="XM_048832824.1"/>
</dbReference>
<dbReference type="RefSeq" id="XP_048688788.1">
    <property type="nucleotide sequence ID" value="XM_048832831.1"/>
</dbReference>
<dbReference type="RefSeq" id="XP_048688797.1">
    <property type="nucleotide sequence ID" value="XM_048832840.1"/>
</dbReference>
<dbReference type="PDB" id="1LHS">
    <property type="method" value="X-ray"/>
    <property type="resolution" value="2.00 A"/>
    <property type="chains" value="A=2-154"/>
</dbReference>
<dbReference type="PDB" id="1LHT">
    <property type="method" value="X-ray"/>
    <property type="resolution" value="2.00 A"/>
    <property type="chains" value="A=2-154"/>
</dbReference>
<dbReference type="PDBsum" id="1LHS"/>
<dbReference type="PDBsum" id="1LHT"/>
<dbReference type="SMR" id="P56208"/>
<dbReference type="GeneID" id="125628073"/>
<dbReference type="EvolutionaryTrace" id="P56208"/>
<dbReference type="GO" id="GO:0070062">
    <property type="term" value="C:extracellular exosome"/>
    <property type="evidence" value="ECO:0007669"/>
    <property type="project" value="TreeGrafter"/>
</dbReference>
<dbReference type="GO" id="GO:0016528">
    <property type="term" value="C:sarcoplasm"/>
    <property type="evidence" value="ECO:0000250"/>
    <property type="project" value="UniProtKB"/>
</dbReference>
<dbReference type="GO" id="GO:0020037">
    <property type="term" value="F:heme binding"/>
    <property type="evidence" value="ECO:0007669"/>
    <property type="project" value="InterPro"/>
</dbReference>
<dbReference type="GO" id="GO:0046872">
    <property type="term" value="F:metal ion binding"/>
    <property type="evidence" value="ECO:0007669"/>
    <property type="project" value="UniProtKB-KW"/>
</dbReference>
<dbReference type="GO" id="GO:0098809">
    <property type="term" value="F:nitrite reductase activity"/>
    <property type="evidence" value="ECO:0000250"/>
    <property type="project" value="UniProtKB"/>
</dbReference>
<dbReference type="GO" id="GO:0019825">
    <property type="term" value="F:oxygen binding"/>
    <property type="evidence" value="ECO:0007669"/>
    <property type="project" value="InterPro"/>
</dbReference>
<dbReference type="GO" id="GO:0005344">
    <property type="term" value="F:oxygen carrier activity"/>
    <property type="evidence" value="ECO:0000250"/>
    <property type="project" value="UniProtKB"/>
</dbReference>
<dbReference type="GO" id="GO:0004601">
    <property type="term" value="F:peroxidase activity"/>
    <property type="evidence" value="ECO:0000250"/>
    <property type="project" value="UniProtKB"/>
</dbReference>
<dbReference type="GO" id="GO:0019430">
    <property type="term" value="P:removal of superoxide radicals"/>
    <property type="evidence" value="ECO:0000250"/>
    <property type="project" value="UniProtKB"/>
</dbReference>
<dbReference type="CDD" id="cd08926">
    <property type="entry name" value="Mb"/>
    <property type="match status" value="1"/>
</dbReference>
<dbReference type="Gene3D" id="6.10.140.2100">
    <property type="match status" value="1"/>
</dbReference>
<dbReference type="Gene3D" id="6.10.140.2110">
    <property type="match status" value="1"/>
</dbReference>
<dbReference type="InterPro" id="IPR000971">
    <property type="entry name" value="Globin"/>
</dbReference>
<dbReference type="InterPro" id="IPR009050">
    <property type="entry name" value="Globin-like_sf"/>
</dbReference>
<dbReference type="InterPro" id="IPR002335">
    <property type="entry name" value="Myoglobin"/>
</dbReference>
<dbReference type="PANTHER" id="PTHR47132">
    <property type="entry name" value="MYOGLOBIN"/>
    <property type="match status" value="1"/>
</dbReference>
<dbReference type="PANTHER" id="PTHR47132:SF1">
    <property type="entry name" value="MYOGLOBIN"/>
    <property type="match status" value="1"/>
</dbReference>
<dbReference type="Pfam" id="PF00042">
    <property type="entry name" value="Globin"/>
    <property type="match status" value="1"/>
</dbReference>
<dbReference type="PRINTS" id="PR00613">
    <property type="entry name" value="MYOGLOBIN"/>
</dbReference>
<dbReference type="SUPFAM" id="SSF46458">
    <property type="entry name" value="Globin-like"/>
    <property type="match status" value="1"/>
</dbReference>
<dbReference type="PROSITE" id="PS01033">
    <property type="entry name" value="GLOBIN"/>
    <property type="match status" value="1"/>
</dbReference>
<evidence type="ECO:0000250" key="1">
    <source>
        <dbReference type="UniProtKB" id="P02144"/>
    </source>
</evidence>
<evidence type="ECO:0000250" key="2">
    <source>
        <dbReference type="UniProtKB" id="P02185"/>
    </source>
</evidence>
<evidence type="ECO:0000250" key="3">
    <source>
        <dbReference type="UniProtKB" id="P02189"/>
    </source>
</evidence>
<evidence type="ECO:0000250" key="4">
    <source>
        <dbReference type="UniProtKB" id="P68082"/>
    </source>
</evidence>
<evidence type="ECO:0000255" key="5">
    <source>
        <dbReference type="PROSITE-ProRule" id="PRU00238"/>
    </source>
</evidence>
<evidence type="ECO:0000269" key="6">
    <source>
    </source>
</evidence>
<evidence type="ECO:0000269" key="7">
    <source>
    </source>
</evidence>
<evidence type="ECO:0007744" key="8">
    <source>
        <dbReference type="PDB" id="1LHS"/>
    </source>
</evidence>
<evidence type="ECO:0007744" key="9">
    <source>
        <dbReference type="PDB" id="1LHT"/>
    </source>
</evidence>
<evidence type="ECO:0007829" key="10">
    <source>
        <dbReference type="PDB" id="1LHS"/>
    </source>
</evidence>
<comment type="function">
    <text evidence="1">Monomeric heme protein which primary function is to store oxygen and facilitate its diffusion within muscle tissues. Reversibly binds oxygen through a pentacoordinated heme iron and enables its timely and efficient release as needed during periods of heightened demand. Depending on the oxidative conditions of tissues and cells, and in addition to its ability to bind oxygen, it also has a nitrite reductase activity whereby it regulates the production of bioactive nitric oxide. Under stress conditions, like hypoxia and anoxia, it also protects cells against reactive oxygen species thanks to its pseudoperoxidase activity.</text>
</comment>
<comment type="catalytic activity">
    <reaction evidence="1">
        <text>Fe(III)-heme b-[protein] + nitric oxide + H2O = Fe(II)-heme b-[protein] + nitrite + 2 H(+)</text>
        <dbReference type="Rhea" id="RHEA:77711"/>
        <dbReference type="Rhea" id="RHEA-COMP:18975"/>
        <dbReference type="Rhea" id="RHEA-COMP:18976"/>
        <dbReference type="ChEBI" id="CHEBI:15377"/>
        <dbReference type="ChEBI" id="CHEBI:15378"/>
        <dbReference type="ChEBI" id="CHEBI:16301"/>
        <dbReference type="ChEBI" id="CHEBI:16480"/>
        <dbReference type="ChEBI" id="CHEBI:55376"/>
        <dbReference type="ChEBI" id="CHEBI:60344"/>
    </reaction>
    <physiologicalReaction direction="right-to-left" evidence="1">
        <dbReference type="Rhea" id="RHEA:77713"/>
    </physiologicalReaction>
</comment>
<comment type="catalytic activity">
    <reaction evidence="1">
        <text>H2O2 + AH2 = A + 2 H2O</text>
        <dbReference type="Rhea" id="RHEA:30275"/>
        <dbReference type="ChEBI" id="CHEBI:13193"/>
        <dbReference type="ChEBI" id="CHEBI:15377"/>
        <dbReference type="ChEBI" id="CHEBI:16240"/>
        <dbReference type="ChEBI" id="CHEBI:17499"/>
    </reaction>
</comment>
<comment type="subunit">
    <text evidence="2">Monomeric.</text>
</comment>
<comment type="subcellular location">
    <subcellularLocation>
        <location evidence="1">Cytoplasm</location>
        <location evidence="1">Sarcoplasm</location>
    </subcellularLocation>
</comment>
<comment type="similarity">
    <text evidence="5">Belongs to the globin family.</text>
</comment>
<proteinExistence type="evidence at protein level"/>
<sequence>MGLSDDEWNHVLGIWAKVEPDLSAHGQEVIIRLFQLHPETQERFAKFKNLTTIDALKSSEEVKKHGTTVLTALGRILKQKNNHEQELKPLAESHATKHKIPVKYLEFICEIIVKVIAEKHPSDFGADSQAAMKKALELFRNDMASKYKEFGFQG</sequence>